<keyword id="KW-0488">Methylation</keyword>
<keyword id="KW-0687">Ribonucleoprotein</keyword>
<keyword id="KW-0689">Ribosomal protein</keyword>
<keyword id="KW-0694">RNA-binding</keyword>
<keyword id="KW-0699">rRNA-binding</keyword>
<organism>
    <name type="scientific">Methylobacterium radiotolerans (strain ATCC 27329 / DSM 1819 / JCM 2831 / NBRC 15690 / NCIMB 10815 / 0-1)</name>
    <dbReference type="NCBI Taxonomy" id="426355"/>
    <lineage>
        <taxon>Bacteria</taxon>
        <taxon>Pseudomonadati</taxon>
        <taxon>Pseudomonadota</taxon>
        <taxon>Alphaproteobacteria</taxon>
        <taxon>Hyphomicrobiales</taxon>
        <taxon>Methylobacteriaceae</taxon>
        <taxon>Methylobacterium</taxon>
    </lineage>
</organism>
<feature type="chain" id="PRO_1000141888" description="Large ribosomal subunit protein uL3">
    <location>
        <begin position="1"/>
        <end position="241"/>
    </location>
</feature>
<feature type="region of interest" description="Disordered" evidence="2">
    <location>
        <begin position="140"/>
        <end position="162"/>
    </location>
</feature>
<feature type="region of interest" description="Disordered" evidence="2">
    <location>
        <begin position="217"/>
        <end position="241"/>
    </location>
</feature>
<feature type="compositionally biased region" description="Low complexity" evidence="2">
    <location>
        <begin position="229"/>
        <end position="241"/>
    </location>
</feature>
<feature type="modified residue" description="N5-methylglutamine" evidence="1">
    <location>
        <position position="151"/>
    </location>
</feature>
<comment type="function">
    <text evidence="1">One of the primary rRNA binding proteins, it binds directly near the 3'-end of the 23S rRNA, where it nucleates assembly of the 50S subunit.</text>
</comment>
<comment type="subunit">
    <text evidence="1">Part of the 50S ribosomal subunit. Forms a cluster with proteins L14 and L19.</text>
</comment>
<comment type="PTM">
    <text evidence="1">Methylated by PrmB.</text>
</comment>
<comment type="similarity">
    <text evidence="1">Belongs to the universal ribosomal protein uL3 family.</text>
</comment>
<gene>
    <name evidence="1" type="primary">rplC</name>
    <name type="ordered locus">Mrad2831_2218</name>
</gene>
<name>RL3_METRJ</name>
<sequence>MRSGVIAQKVGMTRVFTDAGEHVPVTVLKIDQCQVVAHRTVEKNGYVALQVGVGKAKVKNVSAAERGRFAVAKVEPKKKLAEFRVTEDALIPVGAEITADHFIPGQFVDVTGTTTGKGFAGGIKRWNFGGLRATHGVSISHRSIGSTGGRQDPGKTFKNKKMPGHLGVERVTTQNLRVVRTDPERGLILVEGAVPGVAGGWIQIRDAVKRKLPADVPLPGKFRENGASAPATEAPAAEETA</sequence>
<evidence type="ECO:0000255" key="1">
    <source>
        <dbReference type="HAMAP-Rule" id="MF_01325"/>
    </source>
</evidence>
<evidence type="ECO:0000256" key="2">
    <source>
        <dbReference type="SAM" id="MobiDB-lite"/>
    </source>
</evidence>
<evidence type="ECO:0000305" key="3"/>
<protein>
    <recommendedName>
        <fullName evidence="1">Large ribosomal subunit protein uL3</fullName>
    </recommendedName>
    <alternativeName>
        <fullName evidence="3">50S ribosomal protein L3</fullName>
    </alternativeName>
</protein>
<dbReference type="EMBL" id="CP001001">
    <property type="protein sequence ID" value="ACB24213.1"/>
    <property type="molecule type" value="Genomic_DNA"/>
</dbReference>
<dbReference type="RefSeq" id="WP_012319186.1">
    <property type="nucleotide sequence ID" value="NC_010505.1"/>
</dbReference>
<dbReference type="SMR" id="B1LWS6"/>
<dbReference type="STRING" id="426355.Mrad2831_2218"/>
<dbReference type="GeneID" id="6138250"/>
<dbReference type="KEGG" id="mrd:Mrad2831_2218"/>
<dbReference type="eggNOG" id="COG0087">
    <property type="taxonomic scope" value="Bacteria"/>
</dbReference>
<dbReference type="HOGENOM" id="CLU_044142_2_0_5"/>
<dbReference type="OrthoDB" id="9806135at2"/>
<dbReference type="Proteomes" id="UP000006589">
    <property type="component" value="Chromosome"/>
</dbReference>
<dbReference type="GO" id="GO:0022625">
    <property type="term" value="C:cytosolic large ribosomal subunit"/>
    <property type="evidence" value="ECO:0007669"/>
    <property type="project" value="TreeGrafter"/>
</dbReference>
<dbReference type="GO" id="GO:0019843">
    <property type="term" value="F:rRNA binding"/>
    <property type="evidence" value="ECO:0007669"/>
    <property type="project" value="UniProtKB-UniRule"/>
</dbReference>
<dbReference type="GO" id="GO:0003735">
    <property type="term" value="F:structural constituent of ribosome"/>
    <property type="evidence" value="ECO:0007669"/>
    <property type="project" value="InterPro"/>
</dbReference>
<dbReference type="GO" id="GO:0006412">
    <property type="term" value="P:translation"/>
    <property type="evidence" value="ECO:0007669"/>
    <property type="project" value="UniProtKB-UniRule"/>
</dbReference>
<dbReference type="FunFam" id="2.40.30.10:FF:000004">
    <property type="entry name" value="50S ribosomal protein L3"/>
    <property type="match status" value="1"/>
</dbReference>
<dbReference type="FunFam" id="3.30.160.810:FF:000001">
    <property type="entry name" value="50S ribosomal protein L3"/>
    <property type="match status" value="1"/>
</dbReference>
<dbReference type="Gene3D" id="3.30.160.810">
    <property type="match status" value="1"/>
</dbReference>
<dbReference type="Gene3D" id="2.40.30.10">
    <property type="entry name" value="Translation factors"/>
    <property type="match status" value="1"/>
</dbReference>
<dbReference type="HAMAP" id="MF_01325_B">
    <property type="entry name" value="Ribosomal_uL3_B"/>
    <property type="match status" value="1"/>
</dbReference>
<dbReference type="InterPro" id="IPR000597">
    <property type="entry name" value="Ribosomal_uL3"/>
</dbReference>
<dbReference type="InterPro" id="IPR019927">
    <property type="entry name" value="Ribosomal_uL3_bac/org-type"/>
</dbReference>
<dbReference type="InterPro" id="IPR019926">
    <property type="entry name" value="Ribosomal_uL3_CS"/>
</dbReference>
<dbReference type="InterPro" id="IPR009000">
    <property type="entry name" value="Transl_B-barrel_sf"/>
</dbReference>
<dbReference type="NCBIfam" id="TIGR03625">
    <property type="entry name" value="L3_bact"/>
    <property type="match status" value="1"/>
</dbReference>
<dbReference type="PANTHER" id="PTHR11229">
    <property type="entry name" value="50S RIBOSOMAL PROTEIN L3"/>
    <property type="match status" value="1"/>
</dbReference>
<dbReference type="PANTHER" id="PTHR11229:SF16">
    <property type="entry name" value="LARGE RIBOSOMAL SUBUNIT PROTEIN UL3C"/>
    <property type="match status" value="1"/>
</dbReference>
<dbReference type="Pfam" id="PF00297">
    <property type="entry name" value="Ribosomal_L3"/>
    <property type="match status" value="1"/>
</dbReference>
<dbReference type="SUPFAM" id="SSF50447">
    <property type="entry name" value="Translation proteins"/>
    <property type="match status" value="1"/>
</dbReference>
<dbReference type="PROSITE" id="PS00474">
    <property type="entry name" value="RIBOSOMAL_L3"/>
    <property type="match status" value="1"/>
</dbReference>
<reference key="1">
    <citation type="submission" date="2008-03" db="EMBL/GenBank/DDBJ databases">
        <title>Complete sequence of chromosome of Methylobacterium radiotolerans JCM 2831.</title>
        <authorList>
            <consortium name="US DOE Joint Genome Institute"/>
            <person name="Copeland A."/>
            <person name="Lucas S."/>
            <person name="Lapidus A."/>
            <person name="Glavina del Rio T."/>
            <person name="Dalin E."/>
            <person name="Tice H."/>
            <person name="Bruce D."/>
            <person name="Goodwin L."/>
            <person name="Pitluck S."/>
            <person name="Kiss H."/>
            <person name="Brettin T."/>
            <person name="Detter J.C."/>
            <person name="Han C."/>
            <person name="Kuske C.R."/>
            <person name="Schmutz J."/>
            <person name="Larimer F."/>
            <person name="Land M."/>
            <person name="Hauser L."/>
            <person name="Kyrpides N."/>
            <person name="Mikhailova N."/>
            <person name="Marx C.J."/>
            <person name="Richardson P."/>
        </authorList>
    </citation>
    <scope>NUCLEOTIDE SEQUENCE [LARGE SCALE GENOMIC DNA]</scope>
    <source>
        <strain>ATCC 27329 / DSM 1819 / JCM 2831 / NBRC 15690 / NCIMB 10815 / 0-1</strain>
    </source>
</reference>
<proteinExistence type="inferred from homology"/>
<accession>B1LWS6</accession>